<organism>
    <name type="scientific">Rattus norvegicus</name>
    <name type="common">Rat</name>
    <dbReference type="NCBI Taxonomy" id="10116"/>
    <lineage>
        <taxon>Eukaryota</taxon>
        <taxon>Metazoa</taxon>
        <taxon>Chordata</taxon>
        <taxon>Craniata</taxon>
        <taxon>Vertebrata</taxon>
        <taxon>Euteleostomi</taxon>
        <taxon>Mammalia</taxon>
        <taxon>Eutheria</taxon>
        <taxon>Euarchontoglires</taxon>
        <taxon>Glires</taxon>
        <taxon>Rodentia</taxon>
        <taxon>Myomorpha</taxon>
        <taxon>Muroidea</taxon>
        <taxon>Muridae</taxon>
        <taxon>Murinae</taxon>
        <taxon>Rattus</taxon>
    </lineage>
</organism>
<evidence type="ECO:0000250" key="1"/>
<evidence type="ECO:0000255" key="2">
    <source>
        <dbReference type="PROSITE-ProRule" id="PRU00277"/>
    </source>
</evidence>
<evidence type="ECO:0000269" key="3">
    <source>
    </source>
</evidence>
<evidence type="ECO:0000305" key="4"/>
<accession>P97534</accession>
<sequence>MGVEIETISPGDGRTFPKKGQICVVHYTGMLQNGKKFDSSRDRNKPFKFRIGKQEVIKGFEEGAAQMSLGQRAKLTCTPDVAYGATGHPGVIPPNATLIFDVELLNLE</sequence>
<reference key="1">
    <citation type="journal article" date="1997" name="J. Biol. Chem.">
        <title>Cyclic ADP-ribose binds to FK506-binding protein 12.6 to release Ca2+ from islet microsomes.</title>
        <authorList>
            <person name="Noguchi N."/>
            <person name="Takasawa S."/>
            <person name="Nata K."/>
            <person name="Tohgo A."/>
            <person name="Kato I."/>
            <person name="Ikehata F."/>
            <person name="Yonekura H."/>
            <person name="Okamoto H."/>
        </authorList>
    </citation>
    <scope>NUCLEOTIDE SEQUENCE [MRNA]</scope>
    <source>
        <strain>Wistar</strain>
        <tissue>Pancreatic islet</tissue>
    </source>
</reference>
<reference key="2">
    <citation type="journal article" date="2010" name="Circ. Res.">
        <title>Kinetics of FKBP12.6 binding to ryanodine receptors in permeabilized cardiac myocytes and effects on Ca sparks.</title>
        <authorList>
            <person name="Guo T."/>
            <person name="Cornea R.L."/>
            <person name="Huke S."/>
            <person name="Camors E."/>
            <person name="Yang Y."/>
            <person name="Picht E."/>
            <person name="Fruen B.R."/>
            <person name="Bers D.M."/>
        </authorList>
    </citation>
    <scope>INTERACTION WITH RYR2</scope>
    <scope>TISSUE SPECIFICITY</scope>
</reference>
<protein>
    <recommendedName>
        <fullName>Peptidyl-prolyl cis-trans isomerase FKBP1B</fullName>
        <shortName>PPIase FKBP1B</shortName>
        <ecNumber>5.2.1.8</ecNumber>
    </recommendedName>
    <alternativeName>
        <fullName>12.6 kDa FK506-binding protein</fullName>
        <shortName>12.6 kDa FKBP</shortName>
        <shortName>FKBP-12.6</shortName>
    </alternativeName>
    <alternativeName>
        <fullName>Calstabin-2</fullName>
    </alternativeName>
    <alternativeName>
        <fullName>FK506-binding protein 1B</fullName>
        <shortName>FKBP-1B</shortName>
    </alternativeName>
    <alternativeName>
        <fullName>Immunophilin FKBP12.6</fullName>
    </alternativeName>
    <alternativeName>
        <fullName>Rotamase</fullName>
    </alternativeName>
</protein>
<proteinExistence type="evidence at protein level"/>
<comment type="function">
    <text>Has the potential to contribute to the immunosuppressive and toxic effects of FK506 and rapamycin. PPIases accelerate the folding of proteins. It catalyzes the cis-trans isomerization of proline imidic peptide bonds in oligopeptides.</text>
</comment>
<comment type="catalytic activity">
    <reaction>
        <text>[protein]-peptidylproline (omega=180) = [protein]-peptidylproline (omega=0)</text>
        <dbReference type="Rhea" id="RHEA:16237"/>
        <dbReference type="Rhea" id="RHEA-COMP:10747"/>
        <dbReference type="Rhea" id="RHEA-COMP:10748"/>
        <dbReference type="ChEBI" id="CHEBI:83833"/>
        <dbReference type="ChEBI" id="CHEBI:83834"/>
        <dbReference type="EC" id="5.2.1.8"/>
    </reaction>
</comment>
<comment type="activity regulation">
    <text>Inhibited by both FK506 and rapamycin.</text>
</comment>
<comment type="subunit">
    <text evidence="1 3">Identified in a complex composed of RYR2, FKBP1B, PKA catalytic subunit, PRKAR2A, AKAP6, and the protein phosphatases PP2A and PP1 (By similarity). Interacts directly with RYR2.</text>
</comment>
<comment type="subcellular location">
    <subcellularLocation>
        <location evidence="1">Cytoplasm</location>
    </subcellularLocation>
    <subcellularLocation>
        <location>Sarcoplasmic reticulum</location>
    </subcellularLocation>
</comment>
<comment type="tissue specificity">
    <text evidence="3">Detected in heart muscle (at protein level). Ubiquitous.</text>
</comment>
<comment type="similarity">
    <text evidence="4">Belongs to the FKBP-type PPIase family. FKBP1 subfamily.</text>
</comment>
<comment type="caution">
    <text evidence="4">Has been suggested to play a role in the regulation of RYR2 channel activity and thereby contribute to the regulation of excitation-contraction coupling in cardiac muscle. According to PubMed:20431056, the amount of FKBP1B in rat heart is much lower than that of RYR2, suggesting that FKBP1B can play only a minor role in the regulation of RYR2 channel activity.</text>
</comment>
<gene>
    <name type="primary">Fkbp1b</name>
</gene>
<dbReference type="EC" id="5.2.1.8"/>
<dbReference type="EMBL" id="D86642">
    <property type="protein sequence ID" value="BAA13154.1"/>
    <property type="molecule type" value="mRNA"/>
</dbReference>
<dbReference type="RefSeq" id="NP_073166.1">
    <property type="nucleotide sequence ID" value="NM_022675.2"/>
</dbReference>
<dbReference type="BMRB" id="P97534"/>
<dbReference type="SMR" id="P97534"/>
<dbReference type="CORUM" id="P97534"/>
<dbReference type="FunCoup" id="P97534">
    <property type="interactions" value="1720"/>
</dbReference>
<dbReference type="STRING" id="10116.ENSRNOP00000067023"/>
<dbReference type="iPTMnet" id="P97534"/>
<dbReference type="PhosphoSitePlus" id="P97534"/>
<dbReference type="jPOST" id="P97534"/>
<dbReference type="PaxDb" id="10116-ENSRNOP00000067023"/>
<dbReference type="Ensembl" id="ENSRNOT00000071784.3">
    <property type="protein sequence ID" value="ENSRNOP00000067023.1"/>
    <property type="gene ID" value="ENSRNOG00000047143.3"/>
</dbReference>
<dbReference type="GeneID" id="58950"/>
<dbReference type="KEGG" id="rno:58950"/>
<dbReference type="AGR" id="RGD:61835"/>
<dbReference type="CTD" id="2281"/>
<dbReference type="RGD" id="61835">
    <property type="gene designation" value="Fkbp1b"/>
</dbReference>
<dbReference type="eggNOG" id="KOG0544">
    <property type="taxonomic scope" value="Eukaryota"/>
</dbReference>
<dbReference type="GeneTree" id="ENSGT00940000153311"/>
<dbReference type="HOGENOM" id="CLU_013615_12_1_1"/>
<dbReference type="InParanoid" id="P97534"/>
<dbReference type="OMA" id="EQFDASW"/>
<dbReference type="OrthoDB" id="1902587at2759"/>
<dbReference type="PhylomeDB" id="P97534"/>
<dbReference type="Reactome" id="R-RNO-2672351">
    <property type="pathway name" value="Stimuli-sensing channels"/>
</dbReference>
<dbReference type="Reactome" id="R-RNO-5578775">
    <property type="pathway name" value="Ion homeostasis"/>
</dbReference>
<dbReference type="PRO" id="PR:P97534"/>
<dbReference type="Proteomes" id="UP000002494">
    <property type="component" value="Chromosome 6"/>
</dbReference>
<dbReference type="Bgee" id="ENSRNOG00000047143">
    <property type="expression patterns" value="Expressed in frontal cortex and 14 other cell types or tissues"/>
</dbReference>
<dbReference type="GO" id="GO:0034704">
    <property type="term" value="C:calcium channel complex"/>
    <property type="evidence" value="ECO:0000266"/>
    <property type="project" value="RGD"/>
</dbReference>
<dbReference type="GO" id="GO:0005737">
    <property type="term" value="C:cytoplasm"/>
    <property type="evidence" value="ECO:0000266"/>
    <property type="project" value="RGD"/>
</dbReference>
<dbReference type="GO" id="GO:0016020">
    <property type="term" value="C:membrane"/>
    <property type="evidence" value="ECO:0000266"/>
    <property type="project" value="RGD"/>
</dbReference>
<dbReference type="GO" id="GO:0016529">
    <property type="term" value="C:sarcoplasmic reticulum"/>
    <property type="evidence" value="ECO:0000266"/>
    <property type="project" value="RGD"/>
</dbReference>
<dbReference type="GO" id="GO:0033017">
    <property type="term" value="C:sarcoplasmic reticulum membrane"/>
    <property type="evidence" value="ECO:0000266"/>
    <property type="project" value="RGD"/>
</dbReference>
<dbReference type="GO" id="GO:0030018">
    <property type="term" value="C:Z disc"/>
    <property type="evidence" value="ECO:0000266"/>
    <property type="project" value="RGD"/>
</dbReference>
<dbReference type="GO" id="GO:0019855">
    <property type="term" value="F:calcium channel inhibitor activity"/>
    <property type="evidence" value="ECO:0000266"/>
    <property type="project" value="RGD"/>
</dbReference>
<dbReference type="GO" id="GO:0005246">
    <property type="term" value="F:calcium channel regulator activity"/>
    <property type="evidence" value="ECO:0000266"/>
    <property type="project" value="RGD"/>
</dbReference>
<dbReference type="GO" id="GO:0030551">
    <property type="term" value="F:cyclic nucleotide binding"/>
    <property type="evidence" value="ECO:0000314"/>
    <property type="project" value="RGD"/>
</dbReference>
<dbReference type="GO" id="GO:0005528">
    <property type="term" value="F:FK506 binding"/>
    <property type="evidence" value="ECO:0000314"/>
    <property type="project" value="RGD"/>
</dbReference>
<dbReference type="GO" id="GO:0003755">
    <property type="term" value="F:peptidyl-prolyl cis-trans isomerase activity"/>
    <property type="evidence" value="ECO:0000266"/>
    <property type="project" value="RGD"/>
</dbReference>
<dbReference type="GO" id="GO:0005102">
    <property type="term" value="F:signaling receptor binding"/>
    <property type="evidence" value="ECO:0000266"/>
    <property type="project" value="RGD"/>
</dbReference>
<dbReference type="GO" id="GO:0044325">
    <property type="term" value="F:transmembrane transporter binding"/>
    <property type="evidence" value="ECO:0000266"/>
    <property type="project" value="RGD"/>
</dbReference>
<dbReference type="GO" id="GO:0019722">
    <property type="term" value="P:calcium-mediated signaling"/>
    <property type="evidence" value="ECO:0000266"/>
    <property type="project" value="RGD"/>
</dbReference>
<dbReference type="GO" id="GO:0030073">
    <property type="term" value="P:insulin secretion"/>
    <property type="evidence" value="ECO:0000266"/>
    <property type="project" value="RGD"/>
</dbReference>
<dbReference type="GO" id="GO:0035773">
    <property type="term" value="P:insulin secretion involved in cellular response to glucose stimulus"/>
    <property type="evidence" value="ECO:0000266"/>
    <property type="project" value="RGD"/>
</dbReference>
<dbReference type="GO" id="GO:0050849">
    <property type="term" value="P:negative regulation of calcium-mediated signaling"/>
    <property type="evidence" value="ECO:0000266"/>
    <property type="project" value="RGD"/>
</dbReference>
<dbReference type="GO" id="GO:0010459">
    <property type="term" value="P:negative regulation of heart rate"/>
    <property type="evidence" value="ECO:0000266"/>
    <property type="project" value="RGD"/>
</dbReference>
<dbReference type="GO" id="GO:0061179">
    <property type="term" value="P:negative regulation of insulin secretion involved in cellular response to glucose stimulus"/>
    <property type="evidence" value="ECO:0000266"/>
    <property type="project" value="RGD"/>
</dbReference>
<dbReference type="GO" id="GO:0051280">
    <property type="term" value="P:negative regulation of release of sequestered calcium ion into cytosol"/>
    <property type="evidence" value="ECO:0000266"/>
    <property type="project" value="RGD"/>
</dbReference>
<dbReference type="GO" id="GO:0019227">
    <property type="term" value="P:neuronal action potential propagation"/>
    <property type="evidence" value="ECO:0000266"/>
    <property type="project" value="RGD"/>
</dbReference>
<dbReference type="GO" id="GO:0048680">
    <property type="term" value="P:positive regulation of axon regeneration"/>
    <property type="evidence" value="ECO:0000314"/>
    <property type="project" value="RGD"/>
</dbReference>
<dbReference type="GO" id="GO:0007204">
    <property type="term" value="P:positive regulation of cytosolic calcium ion concentration"/>
    <property type="evidence" value="ECO:0000314"/>
    <property type="project" value="RGD"/>
</dbReference>
<dbReference type="GO" id="GO:0051284">
    <property type="term" value="P:positive regulation of sequestering of calcium ion"/>
    <property type="evidence" value="ECO:0000266"/>
    <property type="project" value="RGD"/>
</dbReference>
<dbReference type="GO" id="GO:0010881">
    <property type="term" value="P:regulation of cardiac muscle contraction by regulation of the release of sequestered calcium ion"/>
    <property type="evidence" value="ECO:0000266"/>
    <property type="project" value="RGD"/>
</dbReference>
<dbReference type="GO" id="GO:0002027">
    <property type="term" value="P:regulation of heart rate"/>
    <property type="evidence" value="ECO:0000266"/>
    <property type="project" value="RGD"/>
</dbReference>
<dbReference type="GO" id="GO:0010880">
    <property type="term" value="P:regulation of release of sequestered calcium ion into cytosol by sarcoplasmic reticulum"/>
    <property type="evidence" value="ECO:0000266"/>
    <property type="project" value="RGD"/>
</dbReference>
<dbReference type="GO" id="GO:0051209">
    <property type="term" value="P:release of sequestered calcium ion into cytosol"/>
    <property type="evidence" value="ECO:0000266"/>
    <property type="project" value="RGD"/>
</dbReference>
<dbReference type="GO" id="GO:0009749">
    <property type="term" value="P:response to glucose"/>
    <property type="evidence" value="ECO:0000266"/>
    <property type="project" value="RGD"/>
</dbReference>
<dbReference type="GO" id="GO:0042542">
    <property type="term" value="P:response to hydrogen peroxide"/>
    <property type="evidence" value="ECO:0000270"/>
    <property type="project" value="RGD"/>
</dbReference>
<dbReference type="GO" id="GO:0051775">
    <property type="term" value="P:response to redox state"/>
    <property type="evidence" value="ECO:0000266"/>
    <property type="project" value="RGD"/>
</dbReference>
<dbReference type="GO" id="GO:0033197">
    <property type="term" value="P:response to vitamin E"/>
    <property type="evidence" value="ECO:0000270"/>
    <property type="project" value="RGD"/>
</dbReference>
<dbReference type="GO" id="GO:0006939">
    <property type="term" value="P:smooth muscle contraction"/>
    <property type="evidence" value="ECO:0000266"/>
    <property type="project" value="RGD"/>
</dbReference>
<dbReference type="GO" id="GO:0042098">
    <property type="term" value="P:T cell proliferation"/>
    <property type="evidence" value="ECO:0000266"/>
    <property type="project" value="RGD"/>
</dbReference>
<dbReference type="FunFam" id="3.10.50.40:FF:000008">
    <property type="entry name" value="Peptidylprolyl isomerase"/>
    <property type="match status" value="1"/>
</dbReference>
<dbReference type="Gene3D" id="3.10.50.40">
    <property type="match status" value="1"/>
</dbReference>
<dbReference type="InterPro" id="IPR050689">
    <property type="entry name" value="FKBP-type_PPIase"/>
</dbReference>
<dbReference type="InterPro" id="IPR046357">
    <property type="entry name" value="PPIase_dom_sf"/>
</dbReference>
<dbReference type="InterPro" id="IPR001179">
    <property type="entry name" value="PPIase_FKBP_dom"/>
</dbReference>
<dbReference type="PANTHER" id="PTHR10516">
    <property type="entry name" value="PEPTIDYL-PROLYL CIS-TRANS ISOMERASE"/>
    <property type="match status" value="1"/>
</dbReference>
<dbReference type="PANTHER" id="PTHR10516:SF429">
    <property type="entry name" value="PEPTIDYL-PROLYL CIS-TRANS ISOMERASE FKBP1B"/>
    <property type="match status" value="1"/>
</dbReference>
<dbReference type="Pfam" id="PF00254">
    <property type="entry name" value="FKBP_C"/>
    <property type="match status" value="1"/>
</dbReference>
<dbReference type="SUPFAM" id="SSF54534">
    <property type="entry name" value="FKBP-like"/>
    <property type="match status" value="1"/>
</dbReference>
<dbReference type="PROSITE" id="PS50059">
    <property type="entry name" value="FKBP_PPIASE"/>
    <property type="match status" value="1"/>
</dbReference>
<feature type="chain" id="PRO_0000075298" description="Peptidyl-prolyl cis-trans isomerase FKBP1B">
    <location>
        <begin position="1"/>
        <end position="108"/>
    </location>
</feature>
<feature type="domain" description="PPIase FKBP-type" evidence="2">
    <location>
        <begin position="20"/>
        <end position="108"/>
    </location>
</feature>
<keyword id="KW-0963">Cytoplasm</keyword>
<keyword id="KW-0413">Isomerase</keyword>
<keyword id="KW-1185">Reference proteome</keyword>
<keyword id="KW-0697">Rotamase</keyword>
<keyword id="KW-0703">Sarcoplasmic reticulum</keyword>
<name>FKB1B_RAT</name>